<evidence type="ECO:0000255" key="1">
    <source>
        <dbReference type="HAMAP-Rule" id="MF_01306"/>
    </source>
</evidence>
<evidence type="ECO:0000305" key="2"/>
<sequence>MARYTGPSTRIARKFGEAIFGDDKSFEKRNYPPGQHGMAKKRGKKSEFAIQLMEKQKAKYSYGILEKQFRGLFKKAAASKGVTGEILLQLCEARLDNVVYRMGIAPTRRAARQIVSHRHVTVNGELVNVPSYHLKPGDKVAVREKSKSLEAIDRSLSNSSHVYEWITWNTAQMEGTFVSVPARLQIPENIKEQLIVELYNK</sequence>
<proteinExistence type="inferred from homology"/>
<gene>
    <name evidence="1" type="primary">rpsD</name>
    <name type="ordered locus">FP1314</name>
</gene>
<dbReference type="EMBL" id="AM398681">
    <property type="protein sequence ID" value="CAL43397.1"/>
    <property type="molecule type" value="Genomic_DNA"/>
</dbReference>
<dbReference type="RefSeq" id="WP_011963446.1">
    <property type="nucleotide sequence ID" value="NC_009613.3"/>
</dbReference>
<dbReference type="RefSeq" id="YP_001296208.1">
    <property type="nucleotide sequence ID" value="NC_009613.3"/>
</dbReference>
<dbReference type="SMR" id="A6GZ74"/>
<dbReference type="STRING" id="402612.FP1314"/>
<dbReference type="EnsemblBacteria" id="CAL43397">
    <property type="protein sequence ID" value="CAL43397"/>
    <property type="gene ID" value="FP1314"/>
</dbReference>
<dbReference type="GeneID" id="66553217"/>
<dbReference type="KEGG" id="fps:FP1314"/>
<dbReference type="PATRIC" id="fig|402612.5.peg.1331"/>
<dbReference type="eggNOG" id="COG0522">
    <property type="taxonomic scope" value="Bacteria"/>
</dbReference>
<dbReference type="HOGENOM" id="CLU_092403_0_2_10"/>
<dbReference type="OrthoDB" id="9803672at2"/>
<dbReference type="Proteomes" id="UP000006394">
    <property type="component" value="Chromosome"/>
</dbReference>
<dbReference type="GO" id="GO:0015935">
    <property type="term" value="C:small ribosomal subunit"/>
    <property type="evidence" value="ECO:0007669"/>
    <property type="project" value="InterPro"/>
</dbReference>
<dbReference type="GO" id="GO:0019843">
    <property type="term" value="F:rRNA binding"/>
    <property type="evidence" value="ECO:0007669"/>
    <property type="project" value="UniProtKB-UniRule"/>
</dbReference>
<dbReference type="GO" id="GO:0003735">
    <property type="term" value="F:structural constituent of ribosome"/>
    <property type="evidence" value="ECO:0007669"/>
    <property type="project" value="InterPro"/>
</dbReference>
<dbReference type="GO" id="GO:0042274">
    <property type="term" value="P:ribosomal small subunit biogenesis"/>
    <property type="evidence" value="ECO:0007669"/>
    <property type="project" value="TreeGrafter"/>
</dbReference>
<dbReference type="GO" id="GO:0006412">
    <property type="term" value="P:translation"/>
    <property type="evidence" value="ECO:0007669"/>
    <property type="project" value="UniProtKB-UniRule"/>
</dbReference>
<dbReference type="CDD" id="cd00165">
    <property type="entry name" value="S4"/>
    <property type="match status" value="1"/>
</dbReference>
<dbReference type="FunFam" id="3.10.290.10:FF:000001">
    <property type="entry name" value="30S ribosomal protein S4"/>
    <property type="match status" value="1"/>
</dbReference>
<dbReference type="Gene3D" id="1.10.1050.10">
    <property type="entry name" value="Ribosomal Protein S4 Delta 41, Chain A, domain 1"/>
    <property type="match status" value="1"/>
</dbReference>
<dbReference type="Gene3D" id="3.10.290.10">
    <property type="entry name" value="RNA-binding S4 domain"/>
    <property type="match status" value="1"/>
</dbReference>
<dbReference type="HAMAP" id="MF_01306_B">
    <property type="entry name" value="Ribosomal_uS4_B"/>
    <property type="match status" value="1"/>
</dbReference>
<dbReference type="InterPro" id="IPR022801">
    <property type="entry name" value="Ribosomal_uS4"/>
</dbReference>
<dbReference type="InterPro" id="IPR005709">
    <property type="entry name" value="Ribosomal_uS4_bac-type"/>
</dbReference>
<dbReference type="InterPro" id="IPR001912">
    <property type="entry name" value="Ribosomal_uS4_N"/>
</dbReference>
<dbReference type="InterPro" id="IPR002942">
    <property type="entry name" value="S4_RNA-bd"/>
</dbReference>
<dbReference type="InterPro" id="IPR036986">
    <property type="entry name" value="S4_RNA-bd_sf"/>
</dbReference>
<dbReference type="NCBIfam" id="NF003717">
    <property type="entry name" value="PRK05327.1"/>
    <property type="match status" value="1"/>
</dbReference>
<dbReference type="NCBIfam" id="TIGR01017">
    <property type="entry name" value="rpsD_bact"/>
    <property type="match status" value="1"/>
</dbReference>
<dbReference type="PANTHER" id="PTHR11831">
    <property type="entry name" value="30S 40S RIBOSOMAL PROTEIN"/>
    <property type="match status" value="1"/>
</dbReference>
<dbReference type="PANTHER" id="PTHR11831:SF4">
    <property type="entry name" value="SMALL RIBOSOMAL SUBUNIT PROTEIN US4M"/>
    <property type="match status" value="1"/>
</dbReference>
<dbReference type="Pfam" id="PF00163">
    <property type="entry name" value="Ribosomal_S4"/>
    <property type="match status" value="1"/>
</dbReference>
<dbReference type="Pfam" id="PF01479">
    <property type="entry name" value="S4"/>
    <property type="match status" value="1"/>
</dbReference>
<dbReference type="SMART" id="SM01390">
    <property type="entry name" value="Ribosomal_S4"/>
    <property type="match status" value="1"/>
</dbReference>
<dbReference type="SMART" id="SM00363">
    <property type="entry name" value="S4"/>
    <property type="match status" value="1"/>
</dbReference>
<dbReference type="SUPFAM" id="SSF55174">
    <property type="entry name" value="Alpha-L RNA-binding motif"/>
    <property type="match status" value="1"/>
</dbReference>
<dbReference type="PROSITE" id="PS50889">
    <property type="entry name" value="S4"/>
    <property type="match status" value="1"/>
</dbReference>
<reference key="1">
    <citation type="journal article" date="2007" name="Nat. Biotechnol.">
        <title>Complete genome sequence of the fish pathogen Flavobacterium psychrophilum.</title>
        <authorList>
            <person name="Duchaud E."/>
            <person name="Boussaha M."/>
            <person name="Loux V."/>
            <person name="Bernardet J.-F."/>
            <person name="Michel C."/>
            <person name="Kerouault B."/>
            <person name="Mondot S."/>
            <person name="Nicolas P."/>
            <person name="Bossy R."/>
            <person name="Caron C."/>
            <person name="Bessieres P."/>
            <person name="Gibrat J.-F."/>
            <person name="Claverol S."/>
            <person name="Dumetz F."/>
            <person name="Le Henaff M."/>
            <person name="Benmansour A."/>
        </authorList>
    </citation>
    <scope>NUCLEOTIDE SEQUENCE [LARGE SCALE GENOMIC DNA]</scope>
    <source>
        <strain>ATCC 49511 / DSM 21280 / CIP 103535 / JIP02/86</strain>
    </source>
</reference>
<name>RS4_FLAPJ</name>
<comment type="function">
    <text evidence="1">One of the primary rRNA binding proteins, it binds directly to 16S rRNA where it nucleates assembly of the body of the 30S subunit.</text>
</comment>
<comment type="function">
    <text evidence="1">With S5 and S12 plays an important role in translational accuracy.</text>
</comment>
<comment type="subunit">
    <text evidence="1">Part of the 30S ribosomal subunit. Contacts protein S5. The interaction surface between S4 and S5 is involved in control of translational fidelity.</text>
</comment>
<comment type="similarity">
    <text evidence="1">Belongs to the universal ribosomal protein uS4 family.</text>
</comment>
<organism>
    <name type="scientific">Flavobacterium psychrophilum (strain ATCC 49511 / DSM 21280 / CIP 103535 / JIP02/86)</name>
    <dbReference type="NCBI Taxonomy" id="402612"/>
    <lineage>
        <taxon>Bacteria</taxon>
        <taxon>Pseudomonadati</taxon>
        <taxon>Bacteroidota</taxon>
        <taxon>Flavobacteriia</taxon>
        <taxon>Flavobacteriales</taxon>
        <taxon>Flavobacteriaceae</taxon>
        <taxon>Flavobacterium</taxon>
    </lineage>
</organism>
<feature type="chain" id="PRO_0000322300" description="Small ribosomal subunit protein uS4">
    <location>
        <begin position="1"/>
        <end position="201"/>
    </location>
</feature>
<feature type="domain" description="S4 RNA-binding" evidence="1">
    <location>
        <begin position="93"/>
        <end position="153"/>
    </location>
</feature>
<keyword id="KW-1185">Reference proteome</keyword>
<keyword id="KW-0687">Ribonucleoprotein</keyword>
<keyword id="KW-0689">Ribosomal protein</keyword>
<keyword id="KW-0694">RNA-binding</keyword>
<keyword id="KW-0699">rRNA-binding</keyword>
<protein>
    <recommendedName>
        <fullName evidence="1">Small ribosomal subunit protein uS4</fullName>
    </recommendedName>
    <alternativeName>
        <fullName evidence="2">30S ribosomal protein S4</fullName>
    </alternativeName>
</protein>
<accession>A6GZ74</accession>